<protein>
    <recommendedName>
        <fullName evidence="1">Large ribosomal subunit protein bL31B</fullName>
    </recommendedName>
    <alternativeName>
        <fullName evidence="2">50S ribosomal protein L31 type B</fullName>
    </alternativeName>
</protein>
<proteinExistence type="inferred from homology"/>
<comment type="subunit">
    <text evidence="1">Part of the 50S ribosomal subunit.</text>
</comment>
<comment type="similarity">
    <text evidence="1">Belongs to the bacterial ribosomal protein bL31 family. Type B subfamily.</text>
</comment>
<dbReference type="EMBL" id="CP000544">
    <property type="protein sequence ID" value="ABM63014.1"/>
    <property type="molecule type" value="Genomic_DNA"/>
</dbReference>
<dbReference type="RefSeq" id="WP_011815036.1">
    <property type="nucleotide sequence ID" value="NC_008789.1"/>
</dbReference>
<dbReference type="SMR" id="A1WZA2"/>
<dbReference type="STRING" id="349124.Hhal_2250"/>
<dbReference type="KEGG" id="hha:Hhal_2250"/>
<dbReference type="eggNOG" id="COG0254">
    <property type="taxonomic scope" value="Bacteria"/>
</dbReference>
<dbReference type="HOGENOM" id="CLU_114306_2_2_6"/>
<dbReference type="OrthoDB" id="9803251at2"/>
<dbReference type="Proteomes" id="UP000000647">
    <property type="component" value="Chromosome"/>
</dbReference>
<dbReference type="GO" id="GO:1990904">
    <property type="term" value="C:ribonucleoprotein complex"/>
    <property type="evidence" value="ECO:0007669"/>
    <property type="project" value="UniProtKB-KW"/>
</dbReference>
<dbReference type="GO" id="GO:0005840">
    <property type="term" value="C:ribosome"/>
    <property type="evidence" value="ECO:0007669"/>
    <property type="project" value="UniProtKB-KW"/>
</dbReference>
<dbReference type="GO" id="GO:0003735">
    <property type="term" value="F:structural constituent of ribosome"/>
    <property type="evidence" value="ECO:0007669"/>
    <property type="project" value="InterPro"/>
</dbReference>
<dbReference type="GO" id="GO:0006412">
    <property type="term" value="P:translation"/>
    <property type="evidence" value="ECO:0007669"/>
    <property type="project" value="UniProtKB-UniRule"/>
</dbReference>
<dbReference type="Gene3D" id="4.10.830.30">
    <property type="entry name" value="Ribosomal protein L31"/>
    <property type="match status" value="1"/>
</dbReference>
<dbReference type="HAMAP" id="MF_00502">
    <property type="entry name" value="Ribosomal_bL31_2"/>
    <property type="match status" value="1"/>
</dbReference>
<dbReference type="InterPro" id="IPR034704">
    <property type="entry name" value="Ribosomal_bL28/bL31-like_sf"/>
</dbReference>
<dbReference type="InterPro" id="IPR002150">
    <property type="entry name" value="Ribosomal_bL31"/>
</dbReference>
<dbReference type="InterPro" id="IPR027493">
    <property type="entry name" value="Ribosomal_bL31_B"/>
</dbReference>
<dbReference type="InterPro" id="IPR042105">
    <property type="entry name" value="Ribosomal_bL31_sf"/>
</dbReference>
<dbReference type="NCBIfam" id="TIGR00105">
    <property type="entry name" value="L31"/>
    <property type="match status" value="1"/>
</dbReference>
<dbReference type="NCBIfam" id="NF002462">
    <property type="entry name" value="PRK01678.1"/>
    <property type="match status" value="1"/>
</dbReference>
<dbReference type="PANTHER" id="PTHR33280">
    <property type="entry name" value="50S RIBOSOMAL PROTEIN L31, CHLOROPLASTIC"/>
    <property type="match status" value="1"/>
</dbReference>
<dbReference type="PANTHER" id="PTHR33280:SF1">
    <property type="entry name" value="LARGE RIBOSOMAL SUBUNIT PROTEIN BL31C"/>
    <property type="match status" value="1"/>
</dbReference>
<dbReference type="Pfam" id="PF01197">
    <property type="entry name" value="Ribosomal_L31"/>
    <property type="match status" value="1"/>
</dbReference>
<dbReference type="PRINTS" id="PR01249">
    <property type="entry name" value="RIBOSOMALL31"/>
</dbReference>
<dbReference type="SUPFAM" id="SSF143800">
    <property type="entry name" value="L28p-like"/>
    <property type="match status" value="1"/>
</dbReference>
<dbReference type="PROSITE" id="PS01143">
    <property type="entry name" value="RIBOSOMAL_L31"/>
    <property type="match status" value="1"/>
</dbReference>
<sequence length="87" mass="10129">MKKDIHPEYREVVFQDISTDFSFLTRSTVKTDETITWQDGNEYPLVKIEVSSRSHPFFTGKQRVVHSGGQVDRFRKRFGMTRGSSSQ</sequence>
<gene>
    <name evidence="1" type="primary">rpmE2</name>
    <name type="ordered locus">Hhal_2250</name>
</gene>
<feature type="chain" id="PRO_1000014696" description="Large ribosomal subunit protein bL31B">
    <location>
        <begin position="1"/>
        <end position="87"/>
    </location>
</feature>
<reference key="1">
    <citation type="submission" date="2006-12" db="EMBL/GenBank/DDBJ databases">
        <title>Complete sequence of Halorhodospira halophila SL1.</title>
        <authorList>
            <consortium name="US DOE Joint Genome Institute"/>
            <person name="Copeland A."/>
            <person name="Lucas S."/>
            <person name="Lapidus A."/>
            <person name="Barry K."/>
            <person name="Detter J.C."/>
            <person name="Glavina del Rio T."/>
            <person name="Hammon N."/>
            <person name="Israni S."/>
            <person name="Dalin E."/>
            <person name="Tice H."/>
            <person name="Pitluck S."/>
            <person name="Saunders E."/>
            <person name="Brettin T."/>
            <person name="Bruce D."/>
            <person name="Han C."/>
            <person name="Tapia R."/>
            <person name="Schmutz J."/>
            <person name="Larimer F."/>
            <person name="Land M."/>
            <person name="Hauser L."/>
            <person name="Kyrpides N."/>
            <person name="Mikhailova N."/>
            <person name="Hoff W."/>
            <person name="Richardson P."/>
        </authorList>
    </citation>
    <scope>NUCLEOTIDE SEQUENCE [LARGE SCALE GENOMIC DNA]</scope>
    <source>
        <strain>DSM 244 / SL1</strain>
    </source>
</reference>
<keyword id="KW-1185">Reference proteome</keyword>
<keyword id="KW-0687">Ribonucleoprotein</keyword>
<keyword id="KW-0689">Ribosomal protein</keyword>
<accession>A1WZA2</accession>
<name>RL31B_HALHL</name>
<organism>
    <name type="scientific">Halorhodospira halophila (strain DSM 244 / SL1)</name>
    <name type="common">Ectothiorhodospira halophila (strain DSM 244 / SL1)</name>
    <dbReference type="NCBI Taxonomy" id="349124"/>
    <lineage>
        <taxon>Bacteria</taxon>
        <taxon>Pseudomonadati</taxon>
        <taxon>Pseudomonadota</taxon>
        <taxon>Gammaproteobacteria</taxon>
        <taxon>Chromatiales</taxon>
        <taxon>Ectothiorhodospiraceae</taxon>
        <taxon>Halorhodospira</taxon>
    </lineage>
</organism>
<evidence type="ECO:0000255" key="1">
    <source>
        <dbReference type="HAMAP-Rule" id="MF_00502"/>
    </source>
</evidence>
<evidence type="ECO:0000305" key="2"/>